<dbReference type="EMBL" id="CP000075">
    <property type="protein sequence ID" value="AAY36334.1"/>
    <property type="molecule type" value="Genomic_DNA"/>
</dbReference>
<dbReference type="RefSeq" id="WP_004406396.1">
    <property type="nucleotide sequence ID" value="NC_007005.1"/>
</dbReference>
<dbReference type="RefSeq" id="YP_234372.1">
    <property type="nucleotide sequence ID" value="NC_007005.1"/>
</dbReference>
<dbReference type="SMR" id="Q4ZWY8"/>
<dbReference type="STRING" id="205918.Psyr_1283"/>
<dbReference type="KEGG" id="psb:Psyr_1283"/>
<dbReference type="PATRIC" id="fig|205918.7.peg.1315"/>
<dbReference type="eggNOG" id="COG0806">
    <property type="taxonomic scope" value="Bacteria"/>
</dbReference>
<dbReference type="HOGENOM" id="CLU_077636_1_0_6"/>
<dbReference type="OrthoDB" id="9783509at2"/>
<dbReference type="Proteomes" id="UP000000426">
    <property type="component" value="Chromosome"/>
</dbReference>
<dbReference type="GO" id="GO:0005737">
    <property type="term" value="C:cytoplasm"/>
    <property type="evidence" value="ECO:0007669"/>
    <property type="project" value="UniProtKB-SubCell"/>
</dbReference>
<dbReference type="GO" id="GO:0005840">
    <property type="term" value="C:ribosome"/>
    <property type="evidence" value="ECO:0007669"/>
    <property type="project" value="InterPro"/>
</dbReference>
<dbReference type="GO" id="GO:0043022">
    <property type="term" value="F:ribosome binding"/>
    <property type="evidence" value="ECO:0007669"/>
    <property type="project" value="InterPro"/>
</dbReference>
<dbReference type="GO" id="GO:0042274">
    <property type="term" value="P:ribosomal small subunit biogenesis"/>
    <property type="evidence" value="ECO:0007669"/>
    <property type="project" value="UniProtKB-UniRule"/>
</dbReference>
<dbReference type="GO" id="GO:0006364">
    <property type="term" value="P:rRNA processing"/>
    <property type="evidence" value="ECO:0007669"/>
    <property type="project" value="UniProtKB-UniRule"/>
</dbReference>
<dbReference type="Gene3D" id="2.30.30.240">
    <property type="entry name" value="PRC-barrel domain"/>
    <property type="match status" value="1"/>
</dbReference>
<dbReference type="Gene3D" id="2.40.30.60">
    <property type="entry name" value="RimM"/>
    <property type="match status" value="1"/>
</dbReference>
<dbReference type="HAMAP" id="MF_00014">
    <property type="entry name" value="Ribosome_mat_RimM"/>
    <property type="match status" value="1"/>
</dbReference>
<dbReference type="InterPro" id="IPR011033">
    <property type="entry name" value="PRC_barrel-like_sf"/>
</dbReference>
<dbReference type="InterPro" id="IPR056792">
    <property type="entry name" value="PRC_RimM"/>
</dbReference>
<dbReference type="InterPro" id="IPR011961">
    <property type="entry name" value="RimM"/>
</dbReference>
<dbReference type="InterPro" id="IPR002676">
    <property type="entry name" value="RimM_N"/>
</dbReference>
<dbReference type="InterPro" id="IPR036976">
    <property type="entry name" value="RimM_N_sf"/>
</dbReference>
<dbReference type="InterPro" id="IPR009000">
    <property type="entry name" value="Transl_B-barrel_sf"/>
</dbReference>
<dbReference type="NCBIfam" id="TIGR02273">
    <property type="entry name" value="16S_RimM"/>
    <property type="match status" value="1"/>
</dbReference>
<dbReference type="PANTHER" id="PTHR33692">
    <property type="entry name" value="RIBOSOME MATURATION FACTOR RIMM"/>
    <property type="match status" value="1"/>
</dbReference>
<dbReference type="PANTHER" id="PTHR33692:SF1">
    <property type="entry name" value="RIBOSOME MATURATION FACTOR RIMM"/>
    <property type="match status" value="1"/>
</dbReference>
<dbReference type="Pfam" id="PF24986">
    <property type="entry name" value="PRC_RimM"/>
    <property type="match status" value="1"/>
</dbReference>
<dbReference type="Pfam" id="PF01782">
    <property type="entry name" value="RimM"/>
    <property type="match status" value="1"/>
</dbReference>
<dbReference type="SUPFAM" id="SSF50346">
    <property type="entry name" value="PRC-barrel domain"/>
    <property type="match status" value="1"/>
</dbReference>
<dbReference type="SUPFAM" id="SSF50447">
    <property type="entry name" value="Translation proteins"/>
    <property type="match status" value="1"/>
</dbReference>
<name>RIMM_PSEU2</name>
<keyword id="KW-0143">Chaperone</keyword>
<keyword id="KW-0963">Cytoplasm</keyword>
<keyword id="KW-0690">Ribosome biogenesis</keyword>
<keyword id="KW-0698">rRNA processing</keyword>
<organism>
    <name type="scientific">Pseudomonas syringae pv. syringae (strain B728a)</name>
    <dbReference type="NCBI Taxonomy" id="205918"/>
    <lineage>
        <taxon>Bacteria</taxon>
        <taxon>Pseudomonadati</taxon>
        <taxon>Pseudomonadota</taxon>
        <taxon>Gammaproteobacteria</taxon>
        <taxon>Pseudomonadales</taxon>
        <taxon>Pseudomonadaceae</taxon>
        <taxon>Pseudomonas</taxon>
        <taxon>Pseudomonas syringae</taxon>
    </lineage>
</organism>
<sequence length="179" mass="20133">MNATPASADDLIVIGKIYSVHGVRGEVKVYSFTDPIGNLLDYKTWTLRREGSVDKQVELVSGRLQSKFLVTKLKGLDDREEARLLSGYEICVPRNLFPDLDDGEYYWYQLEGLKVIDQLGQLLGKIDHLLETGSNDVMVVKPCAGSLDDRERLLPYTEQCVLAIDMAAGEMKVDWDADF</sequence>
<protein>
    <recommendedName>
        <fullName evidence="1">Ribosome maturation factor RimM</fullName>
    </recommendedName>
</protein>
<comment type="function">
    <text evidence="1">An accessory protein needed during the final step in the assembly of 30S ribosomal subunit, possibly for assembly of the head region. Essential for efficient processing of 16S rRNA. May be needed both before and after RbfA during the maturation of 16S rRNA. It has affinity for free ribosomal 30S subunits but not for 70S ribosomes.</text>
</comment>
<comment type="subunit">
    <text evidence="1">Binds ribosomal protein uS19.</text>
</comment>
<comment type="subcellular location">
    <subcellularLocation>
        <location evidence="1">Cytoplasm</location>
    </subcellularLocation>
</comment>
<comment type="domain">
    <text evidence="1">The PRC barrel domain binds ribosomal protein uS19.</text>
</comment>
<comment type="similarity">
    <text evidence="1">Belongs to the RimM family.</text>
</comment>
<feature type="chain" id="PRO_0000244151" description="Ribosome maturation factor RimM">
    <location>
        <begin position="1"/>
        <end position="179"/>
    </location>
</feature>
<feature type="domain" description="PRC barrel" evidence="1">
    <location>
        <begin position="102"/>
        <end position="179"/>
    </location>
</feature>
<gene>
    <name evidence="1" type="primary">rimM</name>
    <name type="ordered locus">Psyr_1283</name>
</gene>
<proteinExistence type="inferred from homology"/>
<accession>Q4ZWY8</accession>
<reference key="1">
    <citation type="journal article" date="2005" name="Proc. Natl. Acad. Sci. U.S.A.">
        <title>Comparison of the complete genome sequences of Pseudomonas syringae pv. syringae B728a and pv. tomato DC3000.</title>
        <authorList>
            <person name="Feil H."/>
            <person name="Feil W.S."/>
            <person name="Chain P."/>
            <person name="Larimer F."/>
            <person name="Dibartolo G."/>
            <person name="Copeland A."/>
            <person name="Lykidis A."/>
            <person name="Trong S."/>
            <person name="Nolan M."/>
            <person name="Goltsman E."/>
            <person name="Thiel J."/>
            <person name="Malfatti S."/>
            <person name="Loper J.E."/>
            <person name="Lapidus A."/>
            <person name="Detter J.C."/>
            <person name="Land M."/>
            <person name="Richardson P.M."/>
            <person name="Kyrpides N.C."/>
            <person name="Ivanova N."/>
            <person name="Lindow S.E."/>
        </authorList>
    </citation>
    <scope>NUCLEOTIDE SEQUENCE [LARGE SCALE GENOMIC DNA]</scope>
    <source>
        <strain>B728a</strain>
    </source>
</reference>
<evidence type="ECO:0000255" key="1">
    <source>
        <dbReference type="HAMAP-Rule" id="MF_00014"/>
    </source>
</evidence>